<organism>
    <name type="scientific">Rhodobacter capsulatus</name>
    <name type="common">Rhodopseudomonas capsulata</name>
    <dbReference type="NCBI Taxonomy" id="1061"/>
    <lineage>
        <taxon>Bacteria</taxon>
        <taxon>Pseudomonadati</taxon>
        <taxon>Pseudomonadota</taxon>
        <taxon>Alphaproteobacteria</taxon>
        <taxon>Rhodobacterales</taxon>
        <taxon>Rhodobacter group</taxon>
        <taxon>Rhodobacter</taxon>
    </lineage>
</organism>
<evidence type="ECO:0000305" key="1"/>
<proteinExistence type="inferred from homology"/>
<accession>Q07184</accession>
<dbReference type="EMBL" id="X68444">
    <property type="protein sequence ID" value="CAA48485.1"/>
    <property type="molecule type" value="Genomic_DNA"/>
</dbReference>
<dbReference type="PIR" id="S34814">
    <property type="entry name" value="S34814"/>
</dbReference>
<dbReference type="RefSeq" id="WP_013068968.1">
    <property type="nucleotide sequence ID" value="NZ_VIBE01000016.1"/>
</dbReference>
<dbReference type="SMR" id="Q07184"/>
<dbReference type="GeneID" id="31492052"/>
<dbReference type="OMA" id="VENMMGG"/>
<dbReference type="GO" id="GO:0051537">
    <property type="term" value="F:2 iron, 2 sulfur cluster binding"/>
    <property type="evidence" value="ECO:0007669"/>
    <property type="project" value="UniProtKB-ARBA"/>
</dbReference>
<dbReference type="GO" id="GO:0051539">
    <property type="term" value="F:4 iron, 4 sulfur cluster binding"/>
    <property type="evidence" value="ECO:0007669"/>
    <property type="project" value="TreeGrafter"/>
</dbReference>
<dbReference type="GO" id="GO:0005506">
    <property type="term" value="F:iron ion binding"/>
    <property type="evidence" value="ECO:0007669"/>
    <property type="project" value="TreeGrafter"/>
</dbReference>
<dbReference type="GO" id="GO:0016226">
    <property type="term" value="P:iron-sulfur cluster assembly"/>
    <property type="evidence" value="ECO:0007669"/>
    <property type="project" value="InterPro"/>
</dbReference>
<dbReference type="Gene3D" id="2.60.300.12">
    <property type="entry name" value="HesB-like domain"/>
    <property type="match status" value="1"/>
</dbReference>
<dbReference type="InterPro" id="IPR000361">
    <property type="entry name" value="FeS_biogenesis"/>
</dbReference>
<dbReference type="InterPro" id="IPR016092">
    <property type="entry name" value="FeS_cluster_insertion"/>
</dbReference>
<dbReference type="InterPro" id="IPR017870">
    <property type="entry name" value="FeS_cluster_insertion_CS"/>
</dbReference>
<dbReference type="InterPro" id="IPR035903">
    <property type="entry name" value="HesB-like_dom_sf"/>
</dbReference>
<dbReference type="NCBIfam" id="TIGR00049">
    <property type="entry name" value="iron-sulfur cluster assembly accessory protein"/>
    <property type="match status" value="1"/>
</dbReference>
<dbReference type="PANTHER" id="PTHR43011">
    <property type="entry name" value="IRON-SULFUR CLUSTER ASSEMBLY 2 HOMOLOG, MITOCHONDRIAL"/>
    <property type="match status" value="1"/>
</dbReference>
<dbReference type="PANTHER" id="PTHR43011:SF1">
    <property type="entry name" value="IRON-SULFUR CLUSTER ASSEMBLY 2 HOMOLOG, MITOCHONDRIAL"/>
    <property type="match status" value="1"/>
</dbReference>
<dbReference type="Pfam" id="PF01521">
    <property type="entry name" value="Fe-S_biosyn"/>
    <property type="match status" value="1"/>
</dbReference>
<dbReference type="SUPFAM" id="SSF89360">
    <property type="entry name" value="HesB-like domain"/>
    <property type="match status" value="1"/>
</dbReference>
<dbReference type="PROSITE" id="PS01152">
    <property type="entry name" value="HESB"/>
    <property type="match status" value="1"/>
</dbReference>
<comment type="similarity">
    <text evidence="1">Belongs to the HesB/IscA family.</text>
</comment>
<reference key="1">
    <citation type="journal article" date="1993" name="Mol. Gen. Genet.">
        <title>Nucleotide sequence and genetic analysis of the Rhodobacter capsulatus ORF6-nifUI SVW gene region: possible role of NifW in homocitrate processing.</title>
        <authorList>
            <person name="Masepohl B."/>
            <person name="Angermueller S."/>
            <person name="Hennecke S."/>
            <person name="Huebner P."/>
            <person name="Moreno-Vivian C."/>
            <person name="Klipp W."/>
        </authorList>
    </citation>
    <scope>NUCLEOTIDE SEQUENCE [GENOMIC DNA]</scope>
    <source>
        <strain>ATCC 33303 / B10</strain>
    </source>
</reference>
<protein>
    <recommendedName>
        <fullName>Uncharacterized protein in nifU 5'region</fullName>
    </recommendedName>
    <alternativeName>
        <fullName>ORF6</fullName>
    </alternativeName>
</protein>
<feature type="chain" id="PRO_0000077028" description="Uncharacterized protein in nifU 5'region">
    <location>
        <begin position="1"/>
        <end position="106"/>
    </location>
</feature>
<name>YNIU_RHOCA</name>
<sequence length="106" mass="11018">MIEITQPAQEAIKAAIEGAGQPVAGLRLMVQAGGCAGLKYGMALELEAQPDDASLTFGEVTVLIDPLTREHIEGTKIDFVSNLEGAGFTFDNPNAKSACGCGKSFC</sequence>